<name>RSMG_CLOTE</name>
<sequence>MKYYDILNSACNDVGIGFDENKYNAFIKYKSMIQEWNKKINLTAITEDEDIIKKHFIDCIKIYKFDKFKKLNKIMDVGTGAGFPGIPIKILEEEKEVILLDSLNKRIKFLDEVSKELKLENIKNLHGRAEDYAQKEEFREQFDGVVSRAVANISVLSEFCLPYIRVGGYFIAMKGPNVSEEIDEGKKAIELLGGKLQEIIQVEVEESDLKHNLVIIEKIKNTPNKYPRKAGMVTKKPLK</sequence>
<evidence type="ECO:0000255" key="1">
    <source>
        <dbReference type="HAMAP-Rule" id="MF_00074"/>
    </source>
</evidence>
<accession>Q899S0</accession>
<protein>
    <recommendedName>
        <fullName evidence="1">Ribosomal RNA small subunit methyltransferase G</fullName>
        <ecNumber evidence="1">2.1.1.-</ecNumber>
    </recommendedName>
    <alternativeName>
        <fullName evidence="1">16S rRNA 7-methylguanosine methyltransferase</fullName>
        <shortName evidence="1">16S rRNA m7G methyltransferase</shortName>
    </alternativeName>
</protein>
<keyword id="KW-0963">Cytoplasm</keyword>
<keyword id="KW-0489">Methyltransferase</keyword>
<keyword id="KW-1185">Reference proteome</keyword>
<keyword id="KW-0698">rRNA processing</keyword>
<keyword id="KW-0949">S-adenosyl-L-methionine</keyword>
<keyword id="KW-0808">Transferase</keyword>
<reference key="1">
    <citation type="journal article" date="2003" name="Proc. Natl. Acad. Sci. U.S.A.">
        <title>The genome sequence of Clostridium tetani, the causative agent of tetanus disease.</title>
        <authorList>
            <person name="Brueggemann H."/>
            <person name="Baeumer S."/>
            <person name="Fricke W.F."/>
            <person name="Wiezer A."/>
            <person name="Liesegang H."/>
            <person name="Decker I."/>
            <person name="Herzberg C."/>
            <person name="Martinez-Arias R."/>
            <person name="Merkl R."/>
            <person name="Henne A."/>
            <person name="Gottschalk G."/>
        </authorList>
    </citation>
    <scope>NUCLEOTIDE SEQUENCE [LARGE SCALE GENOMIC DNA]</scope>
    <source>
        <strain>Massachusetts / E88</strain>
    </source>
</reference>
<comment type="function">
    <text evidence="1">Specifically methylates the N7 position of a guanine in 16S rRNA.</text>
</comment>
<comment type="subcellular location">
    <subcellularLocation>
        <location evidence="1">Cytoplasm</location>
    </subcellularLocation>
</comment>
<comment type="similarity">
    <text evidence="1">Belongs to the methyltransferase superfamily. RNA methyltransferase RsmG family.</text>
</comment>
<organism>
    <name type="scientific">Clostridium tetani (strain Massachusetts / E88)</name>
    <dbReference type="NCBI Taxonomy" id="212717"/>
    <lineage>
        <taxon>Bacteria</taxon>
        <taxon>Bacillati</taxon>
        <taxon>Bacillota</taxon>
        <taxon>Clostridia</taxon>
        <taxon>Eubacteriales</taxon>
        <taxon>Clostridiaceae</taxon>
        <taxon>Clostridium</taxon>
    </lineage>
</organism>
<proteinExistence type="inferred from homology"/>
<gene>
    <name evidence="1" type="primary">rsmG</name>
    <name type="ordered locus">CTC_00100</name>
</gene>
<dbReference type="EC" id="2.1.1.-" evidence="1"/>
<dbReference type="EMBL" id="AE015927">
    <property type="protein sequence ID" value="AAO34752.1"/>
    <property type="molecule type" value="Genomic_DNA"/>
</dbReference>
<dbReference type="RefSeq" id="WP_011098424.1">
    <property type="nucleotide sequence ID" value="NC_004557.1"/>
</dbReference>
<dbReference type="SMR" id="Q899S0"/>
<dbReference type="STRING" id="212717.CTC_00100"/>
<dbReference type="GeneID" id="24253136"/>
<dbReference type="KEGG" id="ctc:CTC_00100"/>
<dbReference type="HOGENOM" id="CLU_065341_0_0_9"/>
<dbReference type="OrthoDB" id="9808773at2"/>
<dbReference type="Proteomes" id="UP000001412">
    <property type="component" value="Chromosome"/>
</dbReference>
<dbReference type="GO" id="GO:0005829">
    <property type="term" value="C:cytosol"/>
    <property type="evidence" value="ECO:0007669"/>
    <property type="project" value="TreeGrafter"/>
</dbReference>
<dbReference type="GO" id="GO:0070043">
    <property type="term" value="F:rRNA (guanine-N7-)-methyltransferase activity"/>
    <property type="evidence" value="ECO:0007669"/>
    <property type="project" value="UniProtKB-UniRule"/>
</dbReference>
<dbReference type="CDD" id="cd02440">
    <property type="entry name" value="AdoMet_MTases"/>
    <property type="match status" value="1"/>
</dbReference>
<dbReference type="FunFam" id="3.40.50.150:FF:000041">
    <property type="entry name" value="Ribosomal RNA small subunit methyltransferase G"/>
    <property type="match status" value="1"/>
</dbReference>
<dbReference type="Gene3D" id="3.40.50.150">
    <property type="entry name" value="Vaccinia Virus protein VP39"/>
    <property type="match status" value="1"/>
</dbReference>
<dbReference type="HAMAP" id="MF_00074">
    <property type="entry name" value="16SrRNA_methyltr_G"/>
    <property type="match status" value="1"/>
</dbReference>
<dbReference type="InterPro" id="IPR003682">
    <property type="entry name" value="rRNA_ssu_MeTfrase_G"/>
</dbReference>
<dbReference type="InterPro" id="IPR029063">
    <property type="entry name" value="SAM-dependent_MTases_sf"/>
</dbReference>
<dbReference type="NCBIfam" id="TIGR00138">
    <property type="entry name" value="rsmG_gidB"/>
    <property type="match status" value="1"/>
</dbReference>
<dbReference type="PANTHER" id="PTHR31760">
    <property type="entry name" value="S-ADENOSYL-L-METHIONINE-DEPENDENT METHYLTRANSFERASES SUPERFAMILY PROTEIN"/>
    <property type="match status" value="1"/>
</dbReference>
<dbReference type="PANTHER" id="PTHR31760:SF0">
    <property type="entry name" value="S-ADENOSYL-L-METHIONINE-DEPENDENT METHYLTRANSFERASES SUPERFAMILY PROTEIN"/>
    <property type="match status" value="1"/>
</dbReference>
<dbReference type="Pfam" id="PF02527">
    <property type="entry name" value="GidB"/>
    <property type="match status" value="1"/>
</dbReference>
<dbReference type="PIRSF" id="PIRSF003078">
    <property type="entry name" value="GidB"/>
    <property type="match status" value="1"/>
</dbReference>
<dbReference type="SUPFAM" id="SSF53335">
    <property type="entry name" value="S-adenosyl-L-methionine-dependent methyltransferases"/>
    <property type="match status" value="1"/>
</dbReference>
<feature type="chain" id="PRO_0000184238" description="Ribosomal RNA small subunit methyltransferase G">
    <location>
        <begin position="1"/>
        <end position="239"/>
    </location>
</feature>
<feature type="binding site" evidence="1">
    <location>
        <position position="78"/>
    </location>
    <ligand>
        <name>S-adenosyl-L-methionine</name>
        <dbReference type="ChEBI" id="CHEBI:59789"/>
    </ligand>
</feature>
<feature type="binding site" evidence="1">
    <location>
        <position position="83"/>
    </location>
    <ligand>
        <name>S-adenosyl-L-methionine</name>
        <dbReference type="ChEBI" id="CHEBI:59789"/>
    </ligand>
</feature>
<feature type="binding site" evidence="1">
    <location>
        <begin position="129"/>
        <end position="130"/>
    </location>
    <ligand>
        <name>S-adenosyl-L-methionine</name>
        <dbReference type="ChEBI" id="CHEBI:59789"/>
    </ligand>
</feature>
<feature type="binding site" evidence="1">
    <location>
        <position position="148"/>
    </location>
    <ligand>
        <name>S-adenosyl-L-methionine</name>
        <dbReference type="ChEBI" id="CHEBI:59789"/>
    </ligand>
</feature>